<accession>Q9BDS7</accession>
<evidence type="ECO:0000250" key="1">
    <source>
        <dbReference type="UniProtKB" id="P49685"/>
    </source>
</evidence>
<evidence type="ECO:0000250" key="2">
    <source>
        <dbReference type="UniProtKB" id="Q0VDU3"/>
    </source>
</evidence>
<evidence type="ECO:0000255" key="3"/>
<evidence type="ECO:0000255" key="4">
    <source>
        <dbReference type="PROSITE-ProRule" id="PRU00521"/>
    </source>
</evidence>
<feature type="chain" id="PRO_0000069532" description="G-protein coupled receptor 15">
    <location>
        <begin position="1"/>
        <end position="359"/>
    </location>
</feature>
<feature type="topological domain" description="Extracellular" evidence="3">
    <location>
        <begin position="1"/>
        <end position="33"/>
    </location>
</feature>
<feature type="transmembrane region" description="Helical; Name=1" evidence="3">
    <location>
        <begin position="34"/>
        <end position="54"/>
    </location>
</feature>
<feature type="topological domain" description="Cytoplasmic" evidence="3">
    <location>
        <begin position="55"/>
        <end position="69"/>
    </location>
</feature>
<feature type="transmembrane region" description="Helical; Name=2" evidence="3">
    <location>
        <begin position="70"/>
        <end position="90"/>
    </location>
</feature>
<feature type="topological domain" description="Extracellular" evidence="3">
    <location>
        <begin position="91"/>
        <end position="120"/>
    </location>
</feature>
<feature type="transmembrane region" description="Helical; Name=3" evidence="3">
    <location>
        <begin position="121"/>
        <end position="141"/>
    </location>
</feature>
<feature type="topological domain" description="Cytoplasmic" evidence="3">
    <location>
        <begin position="142"/>
        <end position="149"/>
    </location>
</feature>
<feature type="transmembrane region" description="Helical; Name=4" evidence="3">
    <location>
        <begin position="150"/>
        <end position="170"/>
    </location>
</feature>
<feature type="topological domain" description="Extracellular" evidence="3">
    <location>
        <begin position="171"/>
        <end position="192"/>
    </location>
</feature>
<feature type="transmembrane region" description="Helical; Name=5" evidence="3">
    <location>
        <begin position="193"/>
        <end position="213"/>
    </location>
</feature>
<feature type="topological domain" description="Cytoplasmic" evidence="3">
    <location>
        <begin position="214"/>
        <end position="239"/>
    </location>
</feature>
<feature type="transmembrane region" description="Helical; Name=6" evidence="3">
    <location>
        <begin position="240"/>
        <end position="260"/>
    </location>
</feature>
<feature type="topological domain" description="Extracellular" evidence="3">
    <location>
        <begin position="261"/>
        <end position="283"/>
    </location>
</feature>
<feature type="transmembrane region" description="Helical; Name=7" evidence="3">
    <location>
        <begin position="284"/>
        <end position="304"/>
    </location>
</feature>
<feature type="topological domain" description="Cytoplasmic" evidence="3">
    <location>
        <begin position="305"/>
        <end position="359"/>
    </location>
</feature>
<feature type="modified residue" description="Phosphoserine" evidence="1">
    <location>
        <position position="358"/>
    </location>
</feature>
<keyword id="KW-1003">Cell membrane</keyword>
<keyword id="KW-0297">G-protein coupled receptor</keyword>
<keyword id="KW-0472">Membrane</keyword>
<keyword id="KW-0597">Phosphoprotein</keyword>
<keyword id="KW-0675">Receptor</keyword>
<keyword id="KW-1185">Reference proteome</keyword>
<keyword id="KW-0807">Transducer</keyword>
<keyword id="KW-0812">Transmembrane</keyword>
<keyword id="KW-1133">Transmembrane helix</keyword>
<protein>
    <recommendedName>
        <fullName>G-protein coupled receptor 15</fullName>
    </recommendedName>
</protein>
<gene>
    <name type="primary">GPR15</name>
</gene>
<reference key="1">
    <citation type="journal article" date="2001" name="AIDS Res. Hum. Retroviruses">
        <title>Cloning and sequencing of cynomolgus macaque CCR3, GPR15, and STRL33: potential coreceptors for HIV type 1, HIV type 2, and SIV.</title>
        <authorList>
            <person name="Wade-Evans A.M."/>
            <person name="Russell J."/>
            <person name="Jenkins A."/>
            <person name="Javan C."/>
        </authorList>
    </citation>
    <scope>NUCLEOTIDE SEQUENCE [MRNA]</scope>
</reference>
<organism>
    <name type="scientific">Macaca fascicularis</name>
    <name type="common">Crab-eating macaque</name>
    <name type="synonym">Cynomolgus monkey</name>
    <dbReference type="NCBI Taxonomy" id="9541"/>
    <lineage>
        <taxon>Eukaryota</taxon>
        <taxon>Metazoa</taxon>
        <taxon>Chordata</taxon>
        <taxon>Craniata</taxon>
        <taxon>Vertebrata</taxon>
        <taxon>Euteleostomi</taxon>
        <taxon>Mammalia</taxon>
        <taxon>Eutheria</taxon>
        <taxon>Euarchontoglires</taxon>
        <taxon>Primates</taxon>
        <taxon>Haplorrhini</taxon>
        <taxon>Catarrhini</taxon>
        <taxon>Cercopithecidae</taxon>
        <taxon>Cercopithecinae</taxon>
        <taxon>Macaca</taxon>
    </lineage>
</organism>
<comment type="function">
    <text evidence="1 2">G protein-coupled receptor that plays an important role in immune homeostasis. Acts via its natural ligand GPR15LG, a chemokine-like polypeptide strongly expressed in gastrointestinal tissues. GPR15-GPR15LG signaling axis regulates intestinal homeostasis and inflammation through the migration of immune cells (By similarity). Controls thereby the specific homing of T-cells, particularly FOXP3+ regulatory T-cells (Tregs), to the large intestine lamina propria (By similarity). Also required for skin localization of thymus-derived dendritic epidermal T-cells (By similarity). Plays an important role in mediating cytoprotective function as well as angiogenesis of thrombomodulin (By similarity). Mechanistically, preferentially signals through the Gi/o pathway to inhibit adenylate cyclase activity and activate a phosphatidylinositol-calcium second messenger system that regulates the release of Ca(2+) ions from intracellular stores (By similarity).</text>
</comment>
<comment type="subunit">
    <text evidence="1">Interacts with adapter YWHAE; this interaction promotes ER-to-Golgi transport of GPR15.</text>
</comment>
<comment type="subcellular location">
    <subcellularLocation>
        <location evidence="1">Cell membrane</location>
        <topology evidence="1">Multi-pass membrane protein</topology>
    </subcellularLocation>
</comment>
<comment type="PTM">
    <text evidence="1">Phosphorylation is necessary for YWHAE binding and efficient surface expression.</text>
</comment>
<comment type="PTM">
    <text evidence="1">O-glycosylated. Sialylated O-glycans in the N-terminal tail inhibits binding of GPR15LG.</text>
</comment>
<comment type="PTM">
    <text evidence="1">Sulfation is required for efficient binding of GPR15LG.</text>
</comment>
<comment type="similarity">
    <text evidence="4">Belongs to the G-protein coupled receptor 1 family.</text>
</comment>
<sequence length="359" mass="40680">MDPEETSVYLDYYYATSPNPDIRETHSHVPYTSVFLPVFYTAVFLTGVLGNLVLMGALHFKPGSRRLIDIFIINLAASDFIFLVTLPLWVDKEASLGLWRTGSFLCKGSSYMISVNMHCSVFLLTCMSVDRYLAIVCPVVSRKFRRTDCAYVVCASIWFISCLLGLPTLLSRELTLIDDKPYCAEKKATPLKLIWSLVALIFTFFVPLLNIVTCYCCIARKLCAHYQQSGRHNKKLKKSIKIILIVVAAFLVSWLPFNTFKLLAIVSGLQERYFPSAMLQLGMEVSGPLAFANSCVNPFIYYIFDSYIRRAIVHCLCPCLKNYDFGSSTETSDSHLTKALSTFIHAEDFTRRRKRSVSL</sequence>
<name>GPR15_MACFA</name>
<dbReference type="EMBL" id="AF291670">
    <property type="protein sequence ID" value="AAK25741.1"/>
    <property type="molecule type" value="mRNA"/>
</dbReference>
<dbReference type="SMR" id="Q9BDS7"/>
<dbReference type="STRING" id="9541.ENSMFAP00000011291"/>
<dbReference type="eggNOG" id="ENOG502RCE3">
    <property type="taxonomic scope" value="Eukaryota"/>
</dbReference>
<dbReference type="Proteomes" id="UP000233100">
    <property type="component" value="Unplaced"/>
</dbReference>
<dbReference type="GO" id="GO:0009897">
    <property type="term" value="C:external side of plasma membrane"/>
    <property type="evidence" value="ECO:0007669"/>
    <property type="project" value="TreeGrafter"/>
</dbReference>
<dbReference type="GO" id="GO:0005886">
    <property type="term" value="C:plasma membrane"/>
    <property type="evidence" value="ECO:0000250"/>
    <property type="project" value="UniProtKB"/>
</dbReference>
<dbReference type="GO" id="GO:0019957">
    <property type="term" value="F:C-C chemokine binding"/>
    <property type="evidence" value="ECO:0007669"/>
    <property type="project" value="TreeGrafter"/>
</dbReference>
<dbReference type="GO" id="GO:0016493">
    <property type="term" value="F:C-C chemokine receptor activity"/>
    <property type="evidence" value="ECO:0007669"/>
    <property type="project" value="TreeGrafter"/>
</dbReference>
<dbReference type="GO" id="GO:0001525">
    <property type="term" value="P:angiogenesis"/>
    <property type="evidence" value="ECO:0000250"/>
    <property type="project" value="UniProtKB"/>
</dbReference>
<dbReference type="GO" id="GO:0019722">
    <property type="term" value="P:calcium-mediated signaling"/>
    <property type="evidence" value="ECO:0007669"/>
    <property type="project" value="TreeGrafter"/>
</dbReference>
<dbReference type="GO" id="GO:0060326">
    <property type="term" value="P:cell chemotaxis"/>
    <property type="evidence" value="ECO:0007669"/>
    <property type="project" value="TreeGrafter"/>
</dbReference>
<dbReference type="GO" id="GO:0007186">
    <property type="term" value="P:G protein-coupled receptor signaling pathway"/>
    <property type="evidence" value="ECO:0000250"/>
    <property type="project" value="UniProtKB"/>
</dbReference>
<dbReference type="GO" id="GO:0006955">
    <property type="term" value="P:immune response"/>
    <property type="evidence" value="ECO:0007669"/>
    <property type="project" value="TreeGrafter"/>
</dbReference>
<dbReference type="GO" id="GO:0007204">
    <property type="term" value="P:positive regulation of cytosolic calcium ion concentration"/>
    <property type="evidence" value="ECO:0007669"/>
    <property type="project" value="TreeGrafter"/>
</dbReference>
<dbReference type="FunFam" id="1.20.1070.10:FF:000187">
    <property type="entry name" value="G-protein coupled receptor 15"/>
    <property type="match status" value="1"/>
</dbReference>
<dbReference type="Gene3D" id="1.20.1070.10">
    <property type="entry name" value="Rhodopsin 7-helix transmembrane proteins"/>
    <property type="match status" value="1"/>
</dbReference>
<dbReference type="InterPro" id="IPR050119">
    <property type="entry name" value="CCR1-9-like"/>
</dbReference>
<dbReference type="InterPro" id="IPR000276">
    <property type="entry name" value="GPCR_Rhodpsn"/>
</dbReference>
<dbReference type="InterPro" id="IPR017452">
    <property type="entry name" value="GPCR_Rhodpsn_7TM"/>
</dbReference>
<dbReference type="PANTHER" id="PTHR10489">
    <property type="entry name" value="CELL ADHESION MOLECULE"/>
    <property type="match status" value="1"/>
</dbReference>
<dbReference type="PANTHER" id="PTHR10489:SF954">
    <property type="entry name" value="G PROTEIN-COUPLED RECEPTOR 25"/>
    <property type="match status" value="1"/>
</dbReference>
<dbReference type="Pfam" id="PF00001">
    <property type="entry name" value="7tm_1"/>
    <property type="match status" value="1"/>
</dbReference>
<dbReference type="PRINTS" id="PR00237">
    <property type="entry name" value="GPCRRHODOPSN"/>
</dbReference>
<dbReference type="PRINTS" id="PR01157">
    <property type="entry name" value="P2YPURNOCPTR"/>
</dbReference>
<dbReference type="SMART" id="SM01381">
    <property type="entry name" value="7TM_GPCR_Srsx"/>
    <property type="match status" value="1"/>
</dbReference>
<dbReference type="SUPFAM" id="SSF81321">
    <property type="entry name" value="Family A G protein-coupled receptor-like"/>
    <property type="match status" value="1"/>
</dbReference>
<dbReference type="PROSITE" id="PS00237">
    <property type="entry name" value="G_PROTEIN_RECEP_F1_1"/>
    <property type="match status" value="1"/>
</dbReference>
<dbReference type="PROSITE" id="PS50262">
    <property type="entry name" value="G_PROTEIN_RECEP_F1_2"/>
    <property type="match status" value="1"/>
</dbReference>
<proteinExistence type="evidence at transcript level"/>